<reference key="1">
    <citation type="journal article" date="2011" name="J. Bacteriol.">
        <title>Genome of Ochrobactrum anthropi ATCC 49188 T, a versatile opportunistic pathogen and symbiont of several eukaryotic hosts.</title>
        <authorList>
            <person name="Chain P.S."/>
            <person name="Lang D.M."/>
            <person name="Comerci D.J."/>
            <person name="Malfatti S.A."/>
            <person name="Vergez L.M."/>
            <person name="Shin M."/>
            <person name="Ugalde R.A."/>
            <person name="Garcia E."/>
            <person name="Tolmasky M.E."/>
        </authorList>
    </citation>
    <scope>NUCLEOTIDE SEQUENCE [LARGE SCALE GENOMIC DNA]</scope>
    <source>
        <strain>ATCC 49188 / DSM 6882 / CCUG 24695 / JCM 21032 / LMG 3331 / NBRC 15819 / NCTC 12168 / Alc 37</strain>
    </source>
</reference>
<keyword id="KW-0030">Aminoacyl-tRNA synthetase</keyword>
<keyword id="KW-0067">ATP-binding</keyword>
<keyword id="KW-0963">Cytoplasm</keyword>
<keyword id="KW-0436">Ligase</keyword>
<keyword id="KW-0479">Metal-binding</keyword>
<keyword id="KW-0547">Nucleotide-binding</keyword>
<keyword id="KW-0648">Protein biosynthesis</keyword>
<keyword id="KW-1185">Reference proteome</keyword>
<keyword id="KW-0694">RNA-binding</keyword>
<keyword id="KW-0820">tRNA-binding</keyword>
<keyword id="KW-0862">Zinc</keyword>
<evidence type="ECO:0000255" key="1">
    <source>
        <dbReference type="HAMAP-Rule" id="MF_00036"/>
    </source>
</evidence>
<sequence length="885" mass="95477">MAGVNEIRSTFLDYYRKNGHEVVPSSPLVPRNDPTLMFTNAGMVQFKNVFTGLEHRSYNRATTSQKCVRAGGKHNDLDNVGYTARHHTFFEMLGNFSFGDYFKEDAISFAWNLITKEFGLPKDKLLVTVYHTDDDAANYWKKIAGLSDDRIIRIATSDNFWAMGDTGPCGPCSEIFFDHGDHIWGGPPGSADEDGDRFIEIWNLVFMQFEQITPEQRIDLPRPSIDTGMGLERVAAVLQGVHDNYDIDLFKALIRASEEATGVKAEGEFRASHRVIADHLRASSFLIADGVLPSNEGRGYVLRRIMRRAMRHAQLLGAKEPLMWRLLPALIREMGQAYPELIRADALISETLKLEETRFRKTLDRGLGLLSDATESLVEGDRLDGETAFKLYDTYGFPLDLTQDALRQRGIAVDTDGFSAAMQRQKAEARANWAGSGEAATETIWFGIKDKVGATEFLGYETEVAEGVITALVRDGAEVQSAAEGDVVSVVVNQTPFYGESGGQQGDTGTISGEGFAIAIKDTQKKGEGVFVHIGEVTKGTAKTGDAVELKVDSVRRTRIRSNHSATHLLHEALRETLGSHVAQKGSLVAPDRLRFDFSHPKPISAEELTQVENLANEIILQNAPVSTRLMAVDDAIAEGAMALFGEKYGDEVRVVSMGTAKHGSKEGKAYSVELCGGTHVRQTGDIGLVRIVSEGAVAAGVRRMEALTGEAARLYLEEQDERVKAIAGALKTTPSEALERVNALLDERKKLERELADARKKLALGGGSADGGSAVEAVNGVNFLGKIVTGVSPRDLKPLADEGKKQVGSGVVLFIGIGEDSKASAVAAVTEDLVGRFSAVDLVRAASVALGGAGGGGRPDMAQAGGPDGDKADAAIAAVKALII</sequence>
<comment type="function">
    <text evidence="1">Catalyzes the attachment of alanine to tRNA(Ala) in a two-step reaction: alanine is first activated by ATP to form Ala-AMP and then transferred to the acceptor end of tRNA(Ala). Also edits incorrectly charged Ser-tRNA(Ala) and Gly-tRNA(Ala) via its editing domain.</text>
</comment>
<comment type="catalytic activity">
    <reaction evidence="1">
        <text>tRNA(Ala) + L-alanine + ATP = L-alanyl-tRNA(Ala) + AMP + diphosphate</text>
        <dbReference type="Rhea" id="RHEA:12540"/>
        <dbReference type="Rhea" id="RHEA-COMP:9657"/>
        <dbReference type="Rhea" id="RHEA-COMP:9923"/>
        <dbReference type="ChEBI" id="CHEBI:30616"/>
        <dbReference type="ChEBI" id="CHEBI:33019"/>
        <dbReference type="ChEBI" id="CHEBI:57972"/>
        <dbReference type="ChEBI" id="CHEBI:78442"/>
        <dbReference type="ChEBI" id="CHEBI:78497"/>
        <dbReference type="ChEBI" id="CHEBI:456215"/>
        <dbReference type="EC" id="6.1.1.7"/>
    </reaction>
</comment>
<comment type="cofactor">
    <cofactor evidence="1">
        <name>Zn(2+)</name>
        <dbReference type="ChEBI" id="CHEBI:29105"/>
    </cofactor>
    <text evidence="1">Binds 1 zinc ion per subunit.</text>
</comment>
<comment type="subcellular location">
    <subcellularLocation>
        <location evidence="1">Cytoplasm</location>
    </subcellularLocation>
</comment>
<comment type="domain">
    <text evidence="1">Consists of three domains; the N-terminal catalytic domain, the editing domain and the C-terminal C-Ala domain. The editing domain removes incorrectly charged amino acids, while the C-Ala domain, along with tRNA(Ala), serves as a bridge to cooperatively bring together the editing and aminoacylation centers thus stimulating deacylation of misacylated tRNAs.</text>
</comment>
<comment type="similarity">
    <text evidence="1">Belongs to the class-II aminoacyl-tRNA synthetase family.</text>
</comment>
<gene>
    <name evidence="1" type="primary">alaS</name>
    <name type="ordered locus">Oant_1987</name>
</gene>
<name>SYA_BRUA4</name>
<proteinExistence type="inferred from homology"/>
<feature type="chain" id="PRO_0000347706" description="Alanine--tRNA ligase">
    <location>
        <begin position="1"/>
        <end position="885"/>
    </location>
</feature>
<feature type="binding site" evidence="1">
    <location>
        <position position="564"/>
    </location>
    <ligand>
        <name>Zn(2+)</name>
        <dbReference type="ChEBI" id="CHEBI:29105"/>
    </ligand>
</feature>
<feature type="binding site" evidence="1">
    <location>
        <position position="568"/>
    </location>
    <ligand>
        <name>Zn(2+)</name>
        <dbReference type="ChEBI" id="CHEBI:29105"/>
    </ligand>
</feature>
<feature type="binding site" evidence="1">
    <location>
        <position position="676"/>
    </location>
    <ligand>
        <name>Zn(2+)</name>
        <dbReference type="ChEBI" id="CHEBI:29105"/>
    </ligand>
</feature>
<feature type="binding site" evidence="1">
    <location>
        <position position="680"/>
    </location>
    <ligand>
        <name>Zn(2+)</name>
        <dbReference type="ChEBI" id="CHEBI:29105"/>
    </ligand>
</feature>
<protein>
    <recommendedName>
        <fullName evidence="1">Alanine--tRNA ligase</fullName>
        <ecNumber evidence="1">6.1.1.7</ecNumber>
    </recommendedName>
    <alternativeName>
        <fullName evidence="1">Alanyl-tRNA synthetase</fullName>
        <shortName evidence="1">AlaRS</shortName>
    </alternativeName>
</protein>
<accession>A6X0E9</accession>
<organism>
    <name type="scientific">Brucella anthropi (strain ATCC 49188 / DSM 6882 / CCUG 24695 / JCM 21032 / LMG 3331 / NBRC 15819 / NCTC 12168 / Alc 37)</name>
    <name type="common">Ochrobactrum anthropi</name>
    <dbReference type="NCBI Taxonomy" id="439375"/>
    <lineage>
        <taxon>Bacteria</taxon>
        <taxon>Pseudomonadati</taxon>
        <taxon>Pseudomonadota</taxon>
        <taxon>Alphaproteobacteria</taxon>
        <taxon>Hyphomicrobiales</taxon>
        <taxon>Brucellaceae</taxon>
        <taxon>Brucella/Ochrobactrum group</taxon>
        <taxon>Brucella</taxon>
    </lineage>
</organism>
<dbReference type="EC" id="6.1.1.7" evidence="1"/>
<dbReference type="EMBL" id="CP000758">
    <property type="protein sequence ID" value="ABS14703.1"/>
    <property type="molecule type" value="Genomic_DNA"/>
</dbReference>
<dbReference type="RefSeq" id="WP_012091916.1">
    <property type="nucleotide sequence ID" value="NC_009667.1"/>
</dbReference>
<dbReference type="SMR" id="A6X0E9"/>
<dbReference type="STRING" id="439375.Oant_1987"/>
<dbReference type="KEGG" id="oan:Oant_1987"/>
<dbReference type="PATRIC" id="fig|439375.7.peg.2089"/>
<dbReference type="eggNOG" id="COG0013">
    <property type="taxonomic scope" value="Bacteria"/>
</dbReference>
<dbReference type="HOGENOM" id="CLU_004485_1_1_5"/>
<dbReference type="PhylomeDB" id="A6X0E9"/>
<dbReference type="Proteomes" id="UP000002301">
    <property type="component" value="Chromosome 1"/>
</dbReference>
<dbReference type="GO" id="GO:0005829">
    <property type="term" value="C:cytosol"/>
    <property type="evidence" value="ECO:0007669"/>
    <property type="project" value="TreeGrafter"/>
</dbReference>
<dbReference type="GO" id="GO:0004813">
    <property type="term" value="F:alanine-tRNA ligase activity"/>
    <property type="evidence" value="ECO:0007669"/>
    <property type="project" value="UniProtKB-UniRule"/>
</dbReference>
<dbReference type="GO" id="GO:0002161">
    <property type="term" value="F:aminoacyl-tRNA deacylase activity"/>
    <property type="evidence" value="ECO:0007669"/>
    <property type="project" value="TreeGrafter"/>
</dbReference>
<dbReference type="GO" id="GO:0005524">
    <property type="term" value="F:ATP binding"/>
    <property type="evidence" value="ECO:0007669"/>
    <property type="project" value="UniProtKB-UniRule"/>
</dbReference>
<dbReference type="GO" id="GO:0000049">
    <property type="term" value="F:tRNA binding"/>
    <property type="evidence" value="ECO:0007669"/>
    <property type="project" value="UniProtKB-KW"/>
</dbReference>
<dbReference type="GO" id="GO:0008270">
    <property type="term" value="F:zinc ion binding"/>
    <property type="evidence" value="ECO:0007669"/>
    <property type="project" value="UniProtKB-UniRule"/>
</dbReference>
<dbReference type="GO" id="GO:0006419">
    <property type="term" value="P:alanyl-tRNA aminoacylation"/>
    <property type="evidence" value="ECO:0007669"/>
    <property type="project" value="UniProtKB-UniRule"/>
</dbReference>
<dbReference type="GO" id="GO:0045892">
    <property type="term" value="P:negative regulation of DNA-templated transcription"/>
    <property type="evidence" value="ECO:0007669"/>
    <property type="project" value="TreeGrafter"/>
</dbReference>
<dbReference type="CDD" id="cd00673">
    <property type="entry name" value="AlaRS_core"/>
    <property type="match status" value="1"/>
</dbReference>
<dbReference type="FunFam" id="2.40.30.130:FF:000001">
    <property type="entry name" value="Alanine--tRNA ligase"/>
    <property type="match status" value="1"/>
</dbReference>
<dbReference type="FunFam" id="3.10.310.40:FF:000001">
    <property type="entry name" value="Alanine--tRNA ligase"/>
    <property type="match status" value="1"/>
</dbReference>
<dbReference type="FunFam" id="3.30.54.20:FF:000001">
    <property type="entry name" value="Alanine--tRNA ligase"/>
    <property type="match status" value="1"/>
</dbReference>
<dbReference type="FunFam" id="3.30.930.10:FF:000004">
    <property type="entry name" value="Alanine--tRNA ligase"/>
    <property type="match status" value="1"/>
</dbReference>
<dbReference type="FunFam" id="3.30.980.10:FF:000004">
    <property type="entry name" value="Alanine--tRNA ligase, cytoplasmic"/>
    <property type="match status" value="1"/>
</dbReference>
<dbReference type="Gene3D" id="2.40.30.130">
    <property type="match status" value="1"/>
</dbReference>
<dbReference type="Gene3D" id="3.10.310.40">
    <property type="match status" value="1"/>
</dbReference>
<dbReference type="Gene3D" id="3.30.54.20">
    <property type="match status" value="1"/>
</dbReference>
<dbReference type="Gene3D" id="6.10.250.550">
    <property type="match status" value="1"/>
</dbReference>
<dbReference type="Gene3D" id="3.30.930.10">
    <property type="entry name" value="Bira Bifunctional Protein, Domain 2"/>
    <property type="match status" value="1"/>
</dbReference>
<dbReference type="Gene3D" id="3.30.980.10">
    <property type="entry name" value="Threonyl-trna Synthetase, Chain A, domain 2"/>
    <property type="match status" value="1"/>
</dbReference>
<dbReference type="HAMAP" id="MF_00036_B">
    <property type="entry name" value="Ala_tRNA_synth_B"/>
    <property type="match status" value="1"/>
</dbReference>
<dbReference type="InterPro" id="IPR045864">
    <property type="entry name" value="aa-tRNA-synth_II/BPL/LPL"/>
</dbReference>
<dbReference type="InterPro" id="IPR002318">
    <property type="entry name" value="Ala-tRNA-lgiase_IIc"/>
</dbReference>
<dbReference type="InterPro" id="IPR018162">
    <property type="entry name" value="Ala-tRNA-ligase_IIc_anticod-bd"/>
</dbReference>
<dbReference type="InterPro" id="IPR018165">
    <property type="entry name" value="Ala-tRNA-synth_IIc_core"/>
</dbReference>
<dbReference type="InterPro" id="IPR018164">
    <property type="entry name" value="Ala-tRNA-synth_IIc_N"/>
</dbReference>
<dbReference type="InterPro" id="IPR050058">
    <property type="entry name" value="Ala-tRNA_ligase"/>
</dbReference>
<dbReference type="InterPro" id="IPR023033">
    <property type="entry name" value="Ala_tRNA_ligase_euk/bac"/>
</dbReference>
<dbReference type="InterPro" id="IPR003156">
    <property type="entry name" value="DHHA1_dom"/>
</dbReference>
<dbReference type="InterPro" id="IPR018163">
    <property type="entry name" value="Thr/Ala-tRNA-synth_IIc_edit"/>
</dbReference>
<dbReference type="InterPro" id="IPR009000">
    <property type="entry name" value="Transl_B-barrel_sf"/>
</dbReference>
<dbReference type="InterPro" id="IPR012947">
    <property type="entry name" value="tRNA_SAD"/>
</dbReference>
<dbReference type="NCBIfam" id="TIGR00344">
    <property type="entry name" value="alaS"/>
    <property type="match status" value="1"/>
</dbReference>
<dbReference type="PANTHER" id="PTHR11777:SF9">
    <property type="entry name" value="ALANINE--TRNA LIGASE, CYTOPLASMIC"/>
    <property type="match status" value="1"/>
</dbReference>
<dbReference type="PANTHER" id="PTHR11777">
    <property type="entry name" value="ALANYL-TRNA SYNTHETASE"/>
    <property type="match status" value="1"/>
</dbReference>
<dbReference type="Pfam" id="PF02272">
    <property type="entry name" value="DHHA1"/>
    <property type="match status" value="1"/>
</dbReference>
<dbReference type="Pfam" id="PF01411">
    <property type="entry name" value="tRNA-synt_2c"/>
    <property type="match status" value="1"/>
</dbReference>
<dbReference type="Pfam" id="PF07973">
    <property type="entry name" value="tRNA_SAD"/>
    <property type="match status" value="1"/>
</dbReference>
<dbReference type="PRINTS" id="PR00980">
    <property type="entry name" value="TRNASYNTHALA"/>
</dbReference>
<dbReference type="SMART" id="SM00863">
    <property type="entry name" value="tRNA_SAD"/>
    <property type="match status" value="1"/>
</dbReference>
<dbReference type="SUPFAM" id="SSF55681">
    <property type="entry name" value="Class II aaRS and biotin synthetases"/>
    <property type="match status" value="1"/>
</dbReference>
<dbReference type="SUPFAM" id="SSF101353">
    <property type="entry name" value="Putative anticodon-binding domain of alanyl-tRNA synthetase (AlaRS)"/>
    <property type="match status" value="1"/>
</dbReference>
<dbReference type="SUPFAM" id="SSF55186">
    <property type="entry name" value="ThrRS/AlaRS common domain"/>
    <property type="match status" value="1"/>
</dbReference>
<dbReference type="SUPFAM" id="SSF50447">
    <property type="entry name" value="Translation proteins"/>
    <property type="match status" value="1"/>
</dbReference>
<dbReference type="PROSITE" id="PS50860">
    <property type="entry name" value="AA_TRNA_LIGASE_II_ALA"/>
    <property type="match status" value="1"/>
</dbReference>